<evidence type="ECO:0000255" key="1">
    <source>
        <dbReference type="HAMAP-Rule" id="MF_01318"/>
    </source>
</evidence>
<evidence type="ECO:0000305" key="2"/>
<protein>
    <recommendedName>
        <fullName evidence="1">Large ribosomal subunit protein uL1</fullName>
    </recommendedName>
    <alternativeName>
        <fullName evidence="2">50S ribosomal protein L1</fullName>
    </alternativeName>
</protein>
<gene>
    <name evidence="1" type="primary">rplA</name>
    <name type="ordered locus">Rsph17025_2545</name>
</gene>
<feature type="chain" id="PRO_1000051916" description="Large ribosomal subunit protein uL1">
    <location>
        <begin position="1"/>
        <end position="232"/>
    </location>
</feature>
<dbReference type="EMBL" id="CP000661">
    <property type="protein sequence ID" value="ABP71433.1"/>
    <property type="molecule type" value="Genomic_DNA"/>
</dbReference>
<dbReference type="SMR" id="A4WVL9"/>
<dbReference type="STRING" id="349102.Rsph17025_2545"/>
<dbReference type="KEGG" id="rsq:Rsph17025_2545"/>
<dbReference type="eggNOG" id="COG0081">
    <property type="taxonomic scope" value="Bacteria"/>
</dbReference>
<dbReference type="HOGENOM" id="CLU_062853_0_0_5"/>
<dbReference type="BioCyc" id="RSPH349102:G1G8M-2623-MONOMER"/>
<dbReference type="GO" id="GO:0022625">
    <property type="term" value="C:cytosolic large ribosomal subunit"/>
    <property type="evidence" value="ECO:0007669"/>
    <property type="project" value="TreeGrafter"/>
</dbReference>
<dbReference type="GO" id="GO:0019843">
    <property type="term" value="F:rRNA binding"/>
    <property type="evidence" value="ECO:0007669"/>
    <property type="project" value="UniProtKB-UniRule"/>
</dbReference>
<dbReference type="GO" id="GO:0003735">
    <property type="term" value="F:structural constituent of ribosome"/>
    <property type="evidence" value="ECO:0007669"/>
    <property type="project" value="InterPro"/>
</dbReference>
<dbReference type="GO" id="GO:0000049">
    <property type="term" value="F:tRNA binding"/>
    <property type="evidence" value="ECO:0007669"/>
    <property type="project" value="UniProtKB-KW"/>
</dbReference>
<dbReference type="GO" id="GO:0006417">
    <property type="term" value="P:regulation of translation"/>
    <property type="evidence" value="ECO:0007669"/>
    <property type="project" value="UniProtKB-KW"/>
</dbReference>
<dbReference type="GO" id="GO:0006412">
    <property type="term" value="P:translation"/>
    <property type="evidence" value="ECO:0007669"/>
    <property type="project" value="UniProtKB-UniRule"/>
</dbReference>
<dbReference type="CDD" id="cd00403">
    <property type="entry name" value="Ribosomal_L1"/>
    <property type="match status" value="1"/>
</dbReference>
<dbReference type="FunFam" id="3.40.50.790:FF:000001">
    <property type="entry name" value="50S ribosomal protein L1"/>
    <property type="match status" value="1"/>
</dbReference>
<dbReference type="Gene3D" id="3.30.190.20">
    <property type="match status" value="1"/>
</dbReference>
<dbReference type="Gene3D" id="3.40.50.790">
    <property type="match status" value="1"/>
</dbReference>
<dbReference type="HAMAP" id="MF_01318_B">
    <property type="entry name" value="Ribosomal_uL1_B"/>
    <property type="match status" value="1"/>
</dbReference>
<dbReference type="InterPro" id="IPR005878">
    <property type="entry name" value="Ribosom_uL1_bac-type"/>
</dbReference>
<dbReference type="InterPro" id="IPR002143">
    <property type="entry name" value="Ribosomal_uL1"/>
</dbReference>
<dbReference type="InterPro" id="IPR023674">
    <property type="entry name" value="Ribosomal_uL1-like"/>
</dbReference>
<dbReference type="InterPro" id="IPR028364">
    <property type="entry name" value="Ribosomal_uL1/biogenesis"/>
</dbReference>
<dbReference type="InterPro" id="IPR016095">
    <property type="entry name" value="Ribosomal_uL1_3-a/b-sand"/>
</dbReference>
<dbReference type="InterPro" id="IPR023673">
    <property type="entry name" value="Ribosomal_uL1_CS"/>
</dbReference>
<dbReference type="NCBIfam" id="TIGR01169">
    <property type="entry name" value="rplA_bact"/>
    <property type="match status" value="1"/>
</dbReference>
<dbReference type="PANTHER" id="PTHR36427">
    <property type="entry name" value="54S RIBOSOMAL PROTEIN L1, MITOCHONDRIAL"/>
    <property type="match status" value="1"/>
</dbReference>
<dbReference type="PANTHER" id="PTHR36427:SF3">
    <property type="entry name" value="LARGE RIBOSOMAL SUBUNIT PROTEIN UL1M"/>
    <property type="match status" value="1"/>
</dbReference>
<dbReference type="Pfam" id="PF00687">
    <property type="entry name" value="Ribosomal_L1"/>
    <property type="match status" value="1"/>
</dbReference>
<dbReference type="PIRSF" id="PIRSF002155">
    <property type="entry name" value="Ribosomal_L1"/>
    <property type="match status" value="1"/>
</dbReference>
<dbReference type="SUPFAM" id="SSF56808">
    <property type="entry name" value="Ribosomal protein L1"/>
    <property type="match status" value="1"/>
</dbReference>
<dbReference type="PROSITE" id="PS01199">
    <property type="entry name" value="RIBOSOMAL_L1"/>
    <property type="match status" value="1"/>
</dbReference>
<sequence>MAKVGKRTRAAREAFVGKDMVSVEDAVALIKGAASAKFDETLEVAMNLGVDPRHADQMVRGVVTLPNGTGKTVRVAVFARGAKADEAKAAGADIVGAEDLMETIQSGKIEFDRCIATPDMMPLVGRLGKILGPRNLMPNPKVGTVTMDVAGAVGNAKGGEVQFKVEKAGVIHAGVGKISFDAEKLAQNVRAFVDAVNRAKPAGAKGTYLKKVSLSSTMGPGVSVDLASATSH</sequence>
<organism>
    <name type="scientific">Cereibacter sphaeroides (strain ATCC 17025 / ATH 2.4.3)</name>
    <name type="common">Rhodobacter sphaeroides</name>
    <dbReference type="NCBI Taxonomy" id="349102"/>
    <lineage>
        <taxon>Bacteria</taxon>
        <taxon>Pseudomonadati</taxon>
        <taxon>Pseudomonadota</taxon>
        <taxon>Alphaproteobacteria</taxon>
        <taxon>Rhodobacterales</taxon>
        <taxon>Paracoccaceae</taxon>
        <taxon>Cereibacter</taxon>
    </lineage>
</organism>
<comment type="function">
    <text evidence="1">Binds directly to 23S rRNA. The L1 stalk is quite mobile in the ribosome, and is involved in E site tRNA release.</text>
</comment>
<comment type="function">
    <text evidence="1">Protein L1 is also a translational repressor protein, it controls the translation of the L11 operon by binding to its mRNA.</text>
</comment>
<comment type="subunit">
    <text evidence="1">Part of the 50S ribosomal subunit.</text>
</comment>
<comment type="similarity">
    <text evidence="1">Belongs to the universal ribosomal protein uL1 family.</text>
</comment>
<keyword id="KW-0678">Repressor</keyword>
<keyword id="KW-0687">Ribonucleoprotein</keyword>
<keyword id="KW-0689">Ribosomal protein</keyword>
<keyword id="KW-0694">RNA-binding</keyword>
<keyword id="KW-0699">rRNA-binding</keyword>
<keyword id="KW-0810">Translation regulation</keyword>
<keyword id="KW-0820">tRNA-binding</keyword>
<name>RL1_CERS5</name>
<proteinExistence type="inferred from homology"/>
<reference key="1">
    <citation type="submission" date="2007-04" db="EMBL/GenBank/DDBJ databases">
        <title>Complete sequence of chromosome of Rhodobacter sphaeroides ATCC 17025.</title>
        <authorList>
            <consortium name="US DOE Joint Genome Institute"/>
            <person name="Copeland A."/>
            <person name="Lucas S."/>
            <person name="Lapidus A."/>
            <person name="Barry K."/>
            <person name="Detter J.C."/>
            <person name="Glavina del Rio T."/>
            <person name="Hammon N."/>
            <person name="Israni S."/>
            <person name="Dalin E."/>
            <person name="Tice H."/>
            <person name="Pitluck S."/>
            <person name="Chertkov O."/>
            <person name="Brettin T."/>
            <person name="Bruce D."/>
            <person name="Han C."/>
            <person name="Schmutz J."/>
            <person name="Larimer F."/>
            <person name="Land M."/>
            <person name="Hauser L."/>
            <person name="Kyrpides N."/>
            <person name="Kim E."/>
            <person name="Richardson P."/>
            <person name="Mackenzie C."/>
            <person name="Choudhary M."/>
            <person name="Donohue T.J."/>
            <person name="Kaplan S."/>
        </authorList>
    </citation>
    <scope>NUCLEOTIDE SEQUENCE [LARGE SCALE GENOMIC DNA]</scope>
    <source>
        <strain>ATCC 17025 / ATH 2.4.3</strain>
    </source>
</reference>
<accession>A4WVL9</accession>